<proteinExistence type="inferred from homology"/>
<dbReference type="EMBL" id="CP000728">
    <property type="protein sequence ID" value="ABS40055.1"/>
    <property type="molecule type" value="Genomic_DNA"/>
</dbReference>
<dbReference type="RefSeq" id="WP_003359478.1">
    <property type="nucleotide sequence ID" value="NC_009699.1"/>
</dbReference>
<dbReference type="SMR" id="A7G9D5"/>
<dbReference type="GeneID" id="5187947"/>
<dbReference type="KEGG" id="cbf:CLI_0049"/>
<dbReference type="HOGENOM" id="CLU_060739_1_0_9"/>
<dbReference type="Proteomes" id="UP000002410">
    <property type="component" value="Chromosome"/>
</dbReference>
<dbReference type="GO" id="GO:0003677">
    <property type="term" value="F:DNA binding"/>
    <property type="evidence" value="ECO:0007669"/>
    <property type="project" value="UniProtKB-UniRule"/>
</dbReference>
<dbReference type="GO" id="GO:0008270">
    <property type="term" value="F:zinc ion binding"/>
    <property type="evidence" value="ECO:0007669"/>
    <property type="project" value="UniProtKB-KW"/>
</dbReference>
<dbReference type="GO" id="GO:0006310">
    <property type="term" value="P:DNA recombination"/>
    <property type="evidence" value="ECO:0007669"/>
    <property type="project" value="UniProtKB-UniRule"/>
</dbReference>
<dbReference type="GO" id="GO:0006281">
    <property type="term" value="P:DNA repair"/>
    <property type="evidence" value="ECO:0007669"/>
    <property type="project" value="UniProtKB-UniRule"/>
</dbReference>
<dbReference type="CDD" id="cd01025">
    <property type="entry name" value="TOPRIM_recR"/>
    <property type="match status" value="1"/>
</dbReference>
<dbReference type="Gene3D" id="3.30.60.80">
    <property type="match status" value="1"/>
</dbReference>
<dbReference type="Gene3D" id="3.40.1360.10">
    <property type="match status" value="1"/>
</dbReference>
<dbReference type="Gene3D" id="6.10.250.240">
    <property type="match status" value="1"/>
</dbReference>
<dbReference type="Gene3D" id="1.10.8.420">
    <property type="entry name" value="RecR Domain 1"/>
    <property type="match status" value="1"/>
</dbReference>
<dbReference type="HAMAP" id="MF_00017">
    <property type="entry name" value="RecR"/>
    <property type="match status" value="1"/>
</dbReference>
<dbReference type="InterPro" id="IPR000093">
    <property type="entry name" value="DNA_Rcmb_RecR"/>
</dbReference>
<dbReference type="InterPro" id="IPR023627">
    <property type="entry name" value="Rcmb_RecR"/>
</dbReference>
<dbReference type="InterPro" id="IPR015967">
    <property type="entry name" value="Rcmb_RecR_Znf"/>
</dbReference>
<dbReference type="InterPro" id="IPR006171">
    <property type="entry name" value="TOPRIM_dom"/>
</dbReference>
<dbReference type="InterPro" id="IPR034137">
    <property type="entry name" value="TOPRIM_RecR"/>
</dbReference>
<dbReference type="NCBIfam" id="TIGR00615">
    <property type="entry name" value="recR"/>
    <property type="match status" value="1"/>
</dbReference>
<dbReference type="PANTHER" id="PTHR30446">
    <property type="entry name" value="RECOMBINATION PROTEIN RECR"/>
    <property type="match status" value="1"/>
</dbReference>
<dbReference type="PANTHER" id="PTHR30446:SF0">
    <property type="entry name" value="RECOMBINATION PROTEIN RECR"/>
    <property type="match status" value="1"/>
</dbReference>
<dbReference type="Pfam" id="PF21175">
    <property type="entry name" value="RecR_C"/>
    <property type="match status" value="1"/>
</dbReference>
<dbReference type="Pfam" id="PF21176">
    <property type="entry name" value="RecR_HhH"/>
    <property type="match status" value="1"/>
</dbReference>
<dbReference type="Pfam" id="PF02132">
    <property type="entry name" value="RecR_ZnF"/>
    <property type="match status" value="1"/>
</dbReference>
<dbReference type="Pfam" id="PF13662">
    <property type="entry name" value="Toprim_4"/>
    <property type="match status" value="1"/>
</dbReference>
<dbReference type="SMART" id="SM00493">
    <property type="entry name" value="TOPRIM"/>
    <property type="match status" value="1"/>
</dbReference>
<dbReference type="SUPFAM" id="SSF111304">
    <property type="entry name" value="Recombination protein RecR"/>
    <property type="match status" value="1"/>
</dbReference>
<dbReference type="PROSITE" id="PS01300">
    <property type="entry name" value="RECR"/>
    <property type="match status" value="1"/>
</dbReference>
<dbReference type="PROSITE" id="PS50880">
    <property type="entry name" value="TOPRIM"/>
    <property type="match status" value="1"/>
</dbReference>
<protein>
    <recommendedName>
        <fullName evidence="1">Recombination protein RecR</fullName>
    </recommendedName>
</protein>
<sequence>MDFYPIAIEKLIEEFAKLPGIGYKTAQRLTLYVLNLPKEEVKEFSEALVKARGTIKYCSVCGNFTDKDPCAICSNPNRNKSIICVIEQPKDIMSMEKIREYNGVYHVLHGNISPMAGRGPEDIKLKELIRRIDGSVNEVIVATNPNVEGEATAMYISKILKPLGVKVTRIAHGVPVGGDLEYADEVTLAKALEGRIEL</sequence>
<comment type="function">
    <text evidence="1">May play a role in DNA repair. It seems to be involved in an RecBC-independent recombinational process of DNA repair. It may act with RecF and RecO.</text>
</comment>
<comment type="similarity">
    <text evidence="1">Belongs to the RecR family.</text>
</comment>
<accession>A7G9D5</accession>
<feature type="chain" id="PRO_1000001529" description="Recombination protein RecR">
    <location>
        <begin position="1"/>
        <end position="198"/>
    </location>
</feature>
<feature type="domain" description="Toprim" evidence="1">
    <location>
        <begin position="81"/>
        <end position="175"/>
    </location>
</feature>
<feature type="zinc finger region" description="C4-type" evidence="1">
    <location>
        <begin position="58"/>
        <end position="73"/>
    </location>
</feature>
<reference key="1">
    <citation type="submission" date="2007-06" db="EMBL/GenBank/DDBJ databases">
        <authorList>
            <person name="Brinkac L.M."/>
            <person name="Daugherty S."/>
            <person name="Dodson R.J."/>
            <person name="Madupu R."/>
            <person name="Brown J.L."/>
            <person name="Bruce D."/>
            <person name="Detter C."/>
            <person name="Munk C."/>
            <person name="Smith L.A."/>
            <person name="Smith T.J."/>
            <person name="White O."/>
            <person name="Brettin T.S."/>
        </authorList>
    </citation>
    <scope>NUCLEOTIDE SEQUENCE [LARGE SCALE GENOMIC DNA]</scope>
    <source>
        <strain>Langeland / NCTC 10281 / Type F</strain>
    </source>
</reference>
<evidence type="ECO:0000255" key="1">
    <source>
        <dbReference type="HAMAP-Rule" id="MF_00017"/>
    </source>
</evidence>
<name>RECR_CLOBL</name>
<gene>
    <name evidence="1" type="primary">recR</name>
    <name type="ordered locus">CLI_0049</name>
</gene>
<keyword id="KW-0227">DNA damage</keyword>
<keyword id="KW-0233">DNA recombination</keyword>
<keyword id="KW-0234">DNA repair</keyword>
<keyword id="KW-0479">Metal-binding</keyword>
<keyword id="KW-0862">Zinc</keyword>
<keyword id="KW-0863">Zinc-finger</keyword>
<organism>
    <name type="scientific">Clostridium botulinum (strain Langeland / NCTC 10281 / Type F)</name>
    <dbReference type="NCBI Taxonomy" id="441772"/>
    <lineage>
        <taxon>Bacteria</taxon>
        <taxon>Bacillati</taxon>
        <taxon>Bacillota</taxon>
        <taxon>Clostridia</taxon>
        <taxon>Eubacteriales</taxon>
        <taxon>Clostridiaceae</taxon>
        <taxon>Clostridium</taxon>
    </lineage>
</organism>